<accession>Q5BU77</accession>
<dbReference type="EC" id="7.1.1.2"/>
<dbReference type="EMBL" id="AY863427">
    <property type="protein sequence ID" value="AAX19341.1"/>
    <property type="molecule type" value="Genomic_DNA"/>
</dbReference>
<dbReference type="RefSeq" id="YP_214961.1">
    <property type="nucleotide sequence ID" value="NC_006901.1"/>
</dbReference>
<dbReference type="SMR" id="Q5BU77"/>
<dbReference type="GeneID" id="3332138"/>
<dbReference type="CTD" id="4539"/>
<dbReference type="GO" id="GO:0005743">
    <property type="term" value="C:mitochondrial inner membrane"/>
    <property type="evidence" value="ECO:0000250"/>
    <property type="project" value="UniProtKB"/>
</dbReference>
<dbReference type="GO" id="GO:0045271">
    <property type="term" value="C:respiratory chain complex I"/>
    <property type="evidence" value="ECO:0000250"/>
    <property type="project" value="UniProtKB"/>
</dbReference>
<dbReference type="GO" id="GO:0008137">
    <property type="term" value="F:NADH dehydrogenase (ubiquinone) activity"/>
    <property type="evidence" value="ECO:0000250"/>
    <property type="project" value="UniProtKB"/>
</dbReference>
<dbReference type="GO" id="GO:0042773">
    <property type="term" value="P:ATP synthesis coupled electron transport"/>
    <property type="evidence" value="ECO:0007669"/>
    <property type="project" value="InterPro"/>
</dbReference>
<dbReference type="FunFam" id="1.10.287.3510:FF:000002">
    <property type="entry name" value="NADH-ubiquinone oxidoreductase chain 4L"/>
    <property type="match status" value="1"/>
</dbReference>
<dbReference type="Gene3D" id="1.10.287.3510">
    <property type="match status" value="1"/>
</dbReference>
<dbReference type="InterPro" id="IPR001133">
    <property type="entry name" value="NADH_UbQ_OxRdtase_chain4L/K"/>
</dbReference>
<dbReference type="InterPro" id="IPR039428">
    <property type="entry name" value="NUOK/Mnh_C1-like"/>
</dbReference>
<dbReference type="PANTHER" id="PTHR11434:SF0">
    <property type="entry name" value="NADH-UBIQUINONE OXIDOREDUCTASE CHAIN 4L"/>
    <property type="match status" value="1"/>
</dbReference>
<dbReference type="PANTHER" id="PTHR11434">
    <property type="entry name" value="NADH-UBIQUINONE OXIDOREDUCTASE SUBUNIT ND4L"/>
    <property type="match status" value="1"/>
</dbReference>
<dbReference type="Pfam" id="PF00420">
    <property type="entry name" value="Oxidored_q2"/>
    <property type="match status" value="1"/>
</dbReference>
<organism>
    <name type="scientific">Colobus guereza</name>
    <name type="common">Mantled guereza</name>
    <name type="synonym">Eastern black-and-white colobus monkey</name>
    <dbReference type="NCBI Taxonomy" id="33548"/>
    <lineage>
        <taxon>Eukaryota</taxon>
        <taxon>Metazoa</taxon>
        <taxon>Chordata</taxon>
        <taxon>Craniata</taxon>
        <taxon>Vertebrata</taxon>
        <taxon>Euteleostomi</taxon>
        <taxon>Mammalia</taxon>
        <taxon>Eutheria</taxon>
        <taxon>Euarchontoglires</taxon>
        <taxon>Primates</taxon>
        <taxon>Haplorrhini</taxon>
        <taxon>Catarrhini</taxon>
        <taxon>Cercopithecidae</taxon>
        <taxon>Colobinae</taxon>
        <taxon>Colobus</taxon>
    </lineage>
</organism>
<sequence length="98" mass="10749">MPIIYMNIMLAFTISLLGMLIYRSHLMSSLLCLEGMMLSLFIMNTLMALNMHSPLTNIVPITLLVFAACEAAVGLALLVSISSTYGLDHIQNLSLLQC</sequence>
<keyword id="KW-0249">Electron transport</keyword>
<keyword id="KW-0472">Membrane</keyword>
<keyword id="KW-0496">Mitochondrion</keyword>
<keyword id="KW-0999">Mitochondrion inner membrane</keyword>
<keyword id="KW-0520">NAD</keyword>
<keyword id="KW-0679">Respiratory chain</keyword>
<keyword id="KW-1278">Translocase</keyword>
<keyword id="KW-0812">Transmembrane</keyword>
<keyword id="KW-1133">Transmembrane helix</keyword>
<keyword id="KW-0813">Transport</keyword>
<keyword id="KW-0830">Ubiquinone</keyword>
<gene>
    <name type="primary">MT-ND4L</name>
    <name type="synonym">MTND4L</name>
    <name type="synonym">NADH4L</name>
    <name type="synonym">ND4L</name>
</gene>
<proteinExistence type="inferred from homology"/>
<evidence type="ECO:0000250" key="1">
    <source>
        <dbReference type="UniProtKB" id="P03901"/>
    </source>
</evidence>
<evidence type="ECO:0000250" key="2">
    <source>
        <dbReference type="UniProtKB" id="P03902"/>
    </source>
</evidence>
<evidence type="ECO:0000255" key="3"/>
<evidence type="ECO:0000305" key="4"/>
<geneLocation type="mitochondrion"/>
<comment type="function">
    <text evidence="1">Core subunit of the mitochondrial membrane respiratory chain NADH dehydrogenase (Complex I) which catalyzes electron transfer from NADH through the respiratory chain, using ubiquinone as an electron acceptor. Part of the enzyme membrane arm which is embedded in the lipid bilayer and involved in proton translocation.</text>
</comment>
<comment type="catalytic activity">
    <reaction evidence="1">
        <text>a ubiquinone + NADH + 5 H(+)(in) = a ubiquinol + NAD(+) + 4 H(+)(out)</text>
        <dbReference type="Rhea" id="RHEA:29091"/>
        <dbReference type="Rhea" id="RHEA-COMP:9565"/>
        <dbReference type="Rhea" id="RHEA-COMP:9566"/>
        <dbReference type="ChEBI" id="CHEBI:15378"/>
        <dbReference type="ChEBI" id="CHEBI:16389"/>
        <dbReference type="ChEBI" id="CHEBI:17976"/>
        <dbReference type="ChEBI" id="CHEBI:57540"/>
        <dbReference type="ChEBI" id="CHEBI:57945"/>
        <dbReference type="EC" id="7.1.1.2"/>
    </reaction>
    <physiologicalReaction direction="left-to-right" evidence="1">
        <dbReference type="Rhea" id="RHEA:29092"/>
    </physiologicalReaction>
</comment>
<comment type="subunit">
    <text evidence="2">Core subunit of respiratory chain NADH dehydrogenase (Complex I) which is composed of 45 different subunits.</text>
</comment>
<comment type="subcellular location">
    <subcellularLocation>
        <location evidence="2">Mitochondrion inner membrane</location>
        <topology evidence="3">Multi-pass membrane protein</topology>
    </subcellularLocation>
</comment>
<comment type="similarity">
    <text evidence="4">Belongs to the complex I subunit 4L family.</text>
</comment>
<name>NU4LM_COLGU</name>
<protein>
    <recommendedName>
        <fullName>NADH-ubiquinone oxidoreductase chain 4L</fullName>
        <ecNumber>7.1.1.2</ecNumber>
    </recommendedName>
    <alternativeName>
        <fullName>NADH dehydrogenase subunit 4L</fullName>
    </alternativeName>
</protein>
<reference key="1">
    <citation type="journal article" date="2005" name="J. Hum. Evol.">
        <title>Catarrhine primate divergence dates estimated from complete mitochondrial genomes: concordance with fossil and nuclear DNA evidence.</title>
        <authorList>
            <person name="Raaum R.L."/>
            <person name="Sterner K.N."/>
            <person name="Noviello C.M."/>
            <person name="Stewart C.-B.R."/>
            <person name="Disotell T.R."/>
        </authorList>
    </citation>
    <scope>NUCLEOTIDE SEQUENCE [GENOMIC DNA]</scope>
</reference>
<feature type="chain" id="PRO_0000275000" description="NADH-ubiquinone oxidoreductase chain 4L">
    <location>
        <begin position="1"/>
        <end position="98"/>
    </location>
</feature>
<feature type="transmembrane region" description="Helical" evidence="3">
    <location>
        <begin position="1"/>
        <end position="21"/>
    </location>
</feature>
<feature type="transmembrane region" description="Helical" evidence="3">
    <location>
        <begin position="29"/>
        <end position="49"/>
    </location>
</feature>
<feature type="transmembrane region" description="Helical" evidence="3">
    <location>
        <begin position="58"/>
        <end position="78"/>
    </location>
</feature>